<reference key="1">
    <citation type="journal article" date="2009" name="J. Bacteriol.">
        <title>Genome sequences of three Agrobacterium biovars help elucidate the evolution of multichromosome genomes in bacteria.</title>
        <authorList>
            <person name="Slater S.C."/>
            <person name="Goldman B.S."/>
            <person name="Goodner B."/>
            <person name="Setubal J.C."/>
            <person name="Farrand S.K."/>
            <person name="Nester E.W."/>
            <person name="Burr T.J."/>
            <person name="Banta L."/>
            <person name="Dickerman A.W."/>
            <person name="Paulsen I."/>
            <person name="Otten L."/>
            <person name="Suen G."/>
            <person name="Welch R."/>
            <person name="Almeida N.F."/>
            <person name="Arnold F."/>
            <person name="Burton O.T."/>
            <person name="Du Z."/>
            <person name="Ewing A."/>
            <person name="Godsy E."/>
            <person name="Heisel S."/>
            <person name="Houmiel K.L."/>
            <person name="Jhaveri J."/>
            <person name="Lu J."/>
            <person name="Miller N.M."/>
            <person name="Norton S."/>
            <person name="Chen Q."/>
            <person name="Phoolcharoen W."/>
            <person name="Ohlin V."/>
            <person name="Ondrusek D."/>
            <person name="Pride N."/>
            <person name="Stricklin S.L."/>
            <person name="Sun J."/>
            <person name="Wheeler C."/>
            <person name="Wilson L."/>
            <person name="Zhu H."/>
            <person name="Wood D.W."/>
        </authorList>
    </citation>
    <scope>NUCLEOTIDE SEQUENCE [LARGE SCALE GENOMIC DNA]</scope>
    <source>
        <strain>K84 / ATCC BAA-868</strain>
    </source>
</reference>
<sequence>MPKMKTKSSAKKRFKITATGKVKAAAAGKRHGMIKRSNKFIRDARGTMVLAEPDGRKVIKNYLPNGL</sequence>
<organism>
    <name type="scientific">Rhizobium rhizogenes (strain K84 / ATCC BAA-868)</name>
    <name type="common">Agrobacterium radiobacter</name>
    <dbReference type="NCBI Taxonomy" id="311403"/>
    <lineage>
        <taxon>Bacteria</taxon>
        <taxon>Pseudomonadati</taxon>
        <taxon>Pseudomonadota</taxon>
        <taxon>Alphaproteobacteria</taxon>
        <taxon>Hyphomicrobiales</taxon>
        <taxon>Rhizobiaceae</taxon>
        <taxon>Rhizobium/Agrobacterium group</taxon>
        <taxon>Rhizobium</taxon>
    </lineage>
</organism>
<keyword id="KW-0687">Ribonucleoprotein</keyword>
<keyword id="KW-0689">Ribosomal protein</keyword>
<dbReference type="EMBL" id="CP000628">
    <property type="protein sequence ID" value="ACM25133.1"/>
    <property type="molecule type" value="Genomic_DNA"/>
</dbReference>
<dbReference type="RefSeq" id="WP_003544621.1">
    <property type="nucleotide sequence ID" value="NC_011985.1"/>
</dbReference>
<dbReference type="SMR" id="B9J7G1"/>
<dbReference type="STRING" id="311403.Arad_0440"/>
<dbReference type="GeneID" id="86850777"/>
<dbReference type="KEGG" id="ara:Arad_0440"/>
<dbReference type="eggNOG" id="COG0291">
    <property type="taxonomic scope" value="Bacteria"/>
</dbReference>
<dbReference type="HOGENOM" id="CLU_169643_2_1_5"/>
<dbReference type="Proteomes" id="UP000001600">
    <property type="component" value="Chromosome 1"/>
</dbReference>
<dbReference type="GO" id="GO:0022625">
    <property type="term" value="C:cytosolic large ribosomal subunit"/>
    <property type="evidence" value="ECO:0007669"/>
    <property type="project" value="TreeGrafter"/>
</dbReference>
<dbReference type="GO" id="GO:0003735">
    <property type="term" value="F:structural constituent of ribosome"/>
    <property type="evidence" value="ECO:0007669"/>
    <property type="project" value="InterPro"/>
</dbReference>
<dbReference type="GO" id="GO:0006412">
    <property type="term" value="P:translation"/>
    <property type="evidence" value="ECO:0007669"/>
    <property type="project" value="UniProtKB-UniRule"/>
</dbReference>
<dbReference type="FunFam" id="4.10.410.60:FF:000001">
    <property type="entry name" value="50S ribosomal protein L35"/>
    <property type="match status" value="1"/>
</dbReference>
<dbReference type="Gene3D" id="4.10.410.60">
    <property type="match status" value="1"/>
</dbReference>
<dbReference type="HAMAP" id="MF_00514">
    <property type="entry name" value="Ribosomal_bL35"/>
    <property type="match status" value="1"/>
</dbReference>
<dbReference type="InterPro" id="IPR001706">
    <property type="entry name" value="Ribosomal_bL35"/>
</dbReference>
<dbReference type="InterPro" id="IPR021137">
    <property type="entry name" value="Ribosomal_bL35-like"/>
</dbReference>
<dbReference type="InterPro" id="IPR018265">
    <property type="entry name" value="Ribosomal_bL35_CS"/>
</dbReference>
<dbReference type="InterPro" id="IPR037229">
    <property type="entry name" value="Ribosomal_bL35_sf"/>
</dbReference>
<dbReference type="NCBIfam" id="TIGR00001">
    <property type="entry name" value="rpmI_bact"/>
    <property type="match status" value="1"/>
</dbReference>
<dbReference type="PANTHER" id="PTHR33343">
    <property type="entry name" value="54S RIBOSOMAL PROTEIN BL35M"/>
    <property type="match status" value="1"/>
</dbReference>
<dbReference type="PANTHER" id="PTHR33343:SF1">
    <property type="entry name" value="LARGE RIBOSOMAL SUBUNIT PROTEIN BL35M"/>
    <property type="match status" value="1"/>
</dbReference>
<dbReference type="Pfam" id="PF01632">
    <property type="entry name" value="Ribosomal_L35p"/>
    <property type="match status" value="1"/>
</dbReference>
<dbReference type="PRINTS" id="PR00064">
    <property type="entry name" value="RIBOSOMALL35"/>
</dbReference>
<dbReference type="SUPFAM" id="SSF143034">
    <property type="entry name" value="L35p-like"/>
    <property type="match status" value="1"/>
</dbReference>
<dbReference type="PROSITE" id="PS00936">
    <property type="entry name" value="RIBOSOMAL_L35"/>
    <property type="match status" value="1"/>
</dbReference>
<evidence type="ECO:0000255" key="1">
    <source>
        <dbReference type="HAMAP-Rule" id="MF_00514"/>
    </source>
</evidence>
<evidence type="ECO:0000305" key="2"/>
<name>RL35_RHIR8</name>
<protein>
    <recommendedName>
        <fullName evidence="1">Large ribosomal subunit protein bL35</fullName>
    </recommendedName>
    <alternativeName>
        <fullName evidence="2">50S ribosomal protein L35</fullName>
    </alternativeName>
</protein>
<accession>B9J7G1</accession>
<gene>
    <name evidence="1" type="primary">rpmI</name>
    <name type="ordered locus">Arad_0440</name>
</gene>
<comment type="similarity">
    <text evidence="1">Belongs to the bacterial ribosomal protein bL35 family.</text>
</comment>
<feature type="chain" id="PRO_1000146112" description="Large ribosomal subunit protein bL35">
    <location>
        <begin position="1"/>
        <end position="67"/>
    </location>
</feature>
<proteinExistence type="inferred from homology"/>